<organism>
    <name type="scientific">Escherichia coli O157:H7</name>
    <dbReference type="NCBI Taxonomy" id="83334"/>
    <lineage>
        <taxon>Bacteria</taxon>
        <taxon>Pseudomonadati</taxon>
        <taxon>Pseudomonadota</taxon>
        <taxon>Gammaproteobacteria</taxon>
        <taxon>Enterobacterales</taxon>
        <taxon>Enterobacteriaceae</taxon>
        <taxon>Escherichia</taxon>
    </lineage>
</organism>
<proteinExistence type="evidence at protein level"/>
<gene>
    <name evidence="1" type="primary">cyaY</name>
    <name type="ordered locus">Z5323</name>
    <name type="ordered locus">ECs4738</name>
</gene>
<keyword id="KW-0408">Iron</keyword>
<keyword id="KW-0479">Metal-binding</keyword>
<keyword id="KW-1185">Reference proteome</keyword>
<dbReference type="EMBL" id="AE005174">
    <property type="protein sequence ID" value="AAG58999.1"/>
    <property type="molecule type" value="Genomic_DNA"/>
</dbReference>
<dbReference type="EMBL" id="BA000007">
    <property type="protein sequence ID" value="BAB38160.1"/>
    <property type="molecule type" value="Genomic_DNA"/>
</dbReference>
<dbReference type="PIR" id="A91221">
    <property type="entry name" value="A91221"/>
</dbReference>
<dbReference type="PIR" id="C86067">
    <property type="entry name" value="C86067"/>
</dbReference>
<dbReference type="RefSeq" id="NP_312764.1">
    <property type="nucleotide sequence ID" value="NC_002695.1"/>
</dbReference>
<dbReference type="RefSeq" id="WP_000999944.1">
    <property type="nucleotide sequence ID" value="NZ_VOAI01000017.1"/>
</dbReference>
<dbReference type="SMR" id="Q8XAP0"/>
<dbReference type="DIP" id="DIP-58577N"/>
<dbReference type="IntAct" id="Q8XAP0">
    <property type="interactions" value="2"/>
</dbReference>
<dbReference type="STRING" id="155864.Z5323"/>
<dbReference type="GeneID" id="915190"/>
<dbReference type="KEGG" id="ece:Z5323"/>
<dbReference type="KEGG" id="ecs:ECs_4738"/>
<dbReference type="PATRIC" id="fig|386585.9.peg.4943"/>
<dbReference type="eggNOG" id="COG1965">
    <property type="taxonomic scope" value="Bacteria"/>
</dbReference>
<dbReference type="HOGENOM" id="CLU_080880_3_0_6"/>
<dbReference type="OMA" id="EPMHEIW"/>
<dbReference type="Proteomes" id="UP000000558">
    <property type="component" value="Chromosome"/>
</dbReference>
<dbReference type="Proteomes" id="UP000002519">
    <property type="component" value="Chromosome"/>
</dbReference>
<dbReference type="GO" id="GO:0005829">
    <property type="term" value="C:cytosol"/>
    <property type="evidence" value="ECO:0007669"/>
    <property type="project" value="TreeGrafter"/>
</dbReference>
<dbReference type="GO" id="GO:0008199">
    <property type="term" value="F:ferric iron binding"/>
    <property type="evidence" value="ECO:0007669"/>
    <property type="project" value="InterPro"/>
</dbReference>
<dbReference type="GO" id="GO:0008198">
    <property type="term" value="F:ferrous iron binding"/>
    <property type="evidence" value="ECO:0007669"/>
    <property type="project" value="TreeGrafter"/>
</dbReference>
<dbReference type="GO" id="GO:0016226">
    <property type="term" value="P:iron-sulfur cluster assembly"/>
    <property type="evidence" value="ECO:0007669"/>
    <property type="project" value="UniProtKB-UniRule"/>
</dbReference>
<dbReference type="CDD" id="cd00503">
    <property type="entry name" value="Frataxin"/>
    <property type="match status" value="1"/>
</dbReference>
<dbReference type="FunFam" id="3.30.920.10:FF:000001">
    <property type="entry name" value="Iron-sulfur cluster assembly protein CyaY"/>
    <property type="match status" value="1"/>
</dbReference>
<dbReference type="Gene3D" id="3.30.920.10">
    <property type="entry name" value="Frataxin/CyaY"/>
    <property type="match status" value="1"/>
</dbReference>
<dbReference type="HAMAP" id="MF_00142">
    <property type="entry name" value="CyaY"/>
    <property type="match status" value="1"/>
</dbReference>
<dbReference type="InterPro" id="IPR047584">
    <property type="entry name" value="CyaY"/>
</dbReference>
<dbReference type="InterPro" id="IPR002908">
    <property type="entry name" value="Frataxin/CyaY"/>
</dbReference>
<dbReference type="InterPro" id="IPR036524">
    <property type="entry name" value="Frataxin/CyaY_sf"/>
</dbReference>
<dbReference type="InterPro" id="IPR020895">
    <property type="entry name" value="Frataxin_CS"/>
</dbReference>
<dbReference type="NCBIfam" id="TIGR03421">
    <property type="entry name" value="FeS_CyaY"/>
    <property type="match status" value="1"/>
</dbReference>
<dbReference type="PANTHER" id="PTHR16821">
    <property type="entry name" value="FRATAXIN"/>
    <property type="match status" value="1"/>
</dbReference>
<dbReference type="PANTHER" id="PTHR16821:SF2">
    <property type="entry name" value="FRATAXIN, MITOCHONDRIAL"/>
    <property type="match status" value="1"/>
</dbReference>
<dbReference type="Pfam" id="PF01491">
    <property type="entry name" value="Frataxin_Cyay"/>
    <property type="match status" value="1"/>
</dbReference>
<dbReference type="SMART" id="SM01219">
    <property type="entry name" value="Frataxin_Cyay"/>
    <property type="match status" value="1"/>
</dbReference>
<dbReference type="SUPFAM" id="SSF55387">
    <property type="entry name" value="Frataxin/Nqo15-like"/>
    <property type="match status" value="1"/>
</dbReference>
<dbReference type="PROSITE" id="PS01344">
    <property type="entry name" value="FRATAXIN_1"/>
    <property type="match status" value="1"/>
</dbReference>
<dbReference type="PROSITE" id="PS50810">
    <property type="entry name" value="FRATAXIN_2"/>
    <property type="match status" value="1"/>
</dbReference>
<protein>
    <recommendedName>
        <fullName evidence="1">Iron-sulfur cluster assembly protein CyaY</fullName>
    </recommendedName>
</protein>
<feature type="chain" id="PRO_0000193938" description="Iron-sulfur cluster assembly protein CyaY">
    <location>
        <begin position="1"/>
        <end position="106"/>
    </location>
</feature>
<evidence type="ECO:0000255" key="1">
    <source>
        <dbReference type="HAMAP-Rule" id="MF_00142"/>
    </source>
</evidence>
<evidence type="ECO:0000269" key="2">
    <source>
    </source>
</evidence>
<name>CYAY_ECO57</name>
<reference key="1">
    <citation type="journal article" date="2001" name="Nature">
        <title>Genome sequence of enterohaemorrhagic Escherichia coli O157:H7.</title>
        <authorList>
            <person name="Perna N.T."/>
            <person name="Plunkett G. III"/>
            <person name="Burland V."/>
            <person name="Mau B."/>
            <person name="Glasner J.D."/>
            <person name="Rose D.J."/>
            <person name="Mayhew G.F."/>
            <person name="Evans P.S."/>
            <person name="Gregor J."/>
            <person name="Kirkpatrick H.A."/>
            <person name="Posfai G."/>
            <person name="Hackett J."/>
            <person name="Klink S."/>
            <person name="Boutin A."/>
            <person name="Shao Y."/>
            <person name="Miller L."/>
            <person name="Grotbeck E.J."/>
            <person name="Davis N.W."/>
            <person name="Lim A."/>
            <person name="Dimalanta E.T."/>
            <person name="Potamousis K."/>
            <person name="Apodaca J."/>
            <person name="Anantharaman T.S."/>
            <person name="Lin J."/>
            <person name="Yen G."/>
            <person name="Schwartz D.C."/>
            <person name="Welch R.A."/>
            <person name="Blattner F.R."/>
        </authorList>
    </citation>
    <scope>NUCLEOTIDE SEQUENCE [LARGE SCALE GENOMIC DNA]</scope>
    <source>
        <strain>O157:H7 / EDL933 / ATCC 700927 / EHEC</strain>
    </source>
</reference>
<reference key="2">
    <citation type="journal article" date="2001" name="DNA Res.">
        <title>Complete genome sequence of enterohemorrhagic Escherichia coli O157:H7 and genomic comparison with a laboratory strain K-12.</title>
        <authorList>
            <person name="Hayashi T."/>
            <person name="Makino K."/>
            <person name="Ohnishi M."/>
            <person name="Kurokawa K."/>
            <person name="Ishii K."/>
            <person name="Yokoyama K."/>
            <person name="Han C.-G."/>
            <person name="Ohtsubo E."/>
            <person name="Nakayama K."/>
            <person name="Murata T."/>
            <person name="Tanaka M."/>
            <person name="Tobe T."/>
            <person name="Iida T."/>
            <person name="Takami H."/>
            <person name="Honda T."/>
            <person name="Sasakawa C."/>
            <person name="Ogasawara N."/>
            <person name="Yasunaga T."/>
            <person name="Kuhara S."/>
            <person name="Shiba T."/>
            <person name="Hattori M."/>
            <person name="Shinagawa H."/>
        </authorList>
    </citation>
    <scope>NUCLEOTIDE SEQUENCE [LARGE SCALE GENOMIC DNA]</scope>
    <source>
        <strain>O157:H7 / Sakai / RIMD 0509952 / EHEC</strain>
    </source>
</reference>
<reference key="3">
    <citation type="journal article" date="2010" name="PLoS Biol.">
        <title>Structural basis for Fe-S cluster assembly and tRNA thiolation mediated by IscS protein-protein interactions.</title>
        <authorList>
            <person name="Shi R."/>
            <person name="Proteau A."/>
            <person name="Villarroya M."/>
            <person name="Moukadiri I."/>
            <person name="Zhang L."/>
            <person name="Trempe J.F."/>
            <person name="Matte A."/>
            <person name="Armengod M.E."/>
            <person name="Cygler M."/>
        </authorList>
    </citation>
    <scope>INTERACTION WITH ISCS AND ISCU</scope>
    <scope>SUBUNIT</scope>
    <source>
        <strain>O157:H7 / EDL933 / ATCC 700927 / EHEC</strain>
    </source>
</reference>
<accession>Q8XAP0</accession>
<sequence>MNDSEFHRLADQLWLTIEERLDDWDGDSDIDCEINGGVLTITFENGSKIIINRQEPLHQVWLATKQGGYHFDLKGDEWICDRSGETFRDLLEQAATQQAGETVSFR</sequence>
<comment type="function">
    <text evidence="1">Involved in iron-sulfur (Fe-S) cluster assembly. May act as a regulator of Fe-S biogenesis.</text>
</comment>
<comment type="subunit">
    <text evidence="2">Interacts with IscS. Certain pairs of proteins can bind simultaneously to IscS; IscS-IscU-CyaY complexes can be isolated in vitro, but (IscS-TusA-CyaY) complexes cannot.</text>
</comment>
<comment type="interaction">
    <interactant intactId="EBI-15850020">
        <id>Q8XAP0</id>
    </interactant>
    <interactant intactId="EBI-9011195">
        <id>P0A6B9</id>
        <label>iscS</label>
    </interactant>
    <organismsDiffer>false</organismsDiffer>
    <experiments>2</experiments>
</comment>
<comment type="similarity">
    <text evidence="1">Belongs to the frataxin family.</text>
</comment>